<comment type="function">
    <text evidence="1">Catalyzes the attachment of tryptophan to tRNA(Trp).</text>
</comment>
<comment type="catalytic activity">
    <reaction evidence="1">
        <text>tRNA(Trp) + L-tryptophan + ATP = L-tryptophyl-tRNA(Trp) + AMP + diphosphate + H(+)</text>
        <dbReference type="Rhea" id="RHEA:24080"/>
        <dbReference type="Rhea" id="RHEA-COMP:9671"/>
        <dbReference type="Rhea" id="RHEA-COMP:9705"/>
        <dbReference type="ChEBI" id="CHEBI:15378"/>
        <dbReference type="ChEBI" id="CHEBI:30616"/>
        <dbReference type="ChEBI" id="CHEBI:33019"/>
        <dbReference type="ChEBI" id="CHEBI:57912"/>
        <dbReference type="ChEBI" id="CHEBI:78442"/>
        <dbReference type="ChEBI" id="CHEBI:78535"/>
        <dbReference type="ChEBI" id="CHEBI:456215"/>
        <dbReference type="EC" id="6.1.1.2"/>
    </reaction>
</comment>
<comment type="subunit">
    <text evidence="1">Homodimer.</text>
</comment>
<comment type="subcellular location">
    <subcellularLocation>
        <location evidence="1">Cytoplasm</location>
    </subcellularLocation>
</comment>
<comment type="similarity">
    <text evidence="1">Belongs to the class-I aminoacyl-tRNA synthetase family.</text>
</comment>
<organism>
    <name type="scientific">Pseudomonas putida (strain ATCC 47054 / DSM 6125 / CFBP 8728 / NCIMB 11950 / KT2440)</name>
    <dbReference type="NCBI Taxonomy" id="160488"/>
    <lineage>
        <taxon>Bacteria</taxon>
        <taxon>Pseudomonadati</taxon>
        <taxon>Pseudomonadota</taxon>
        <taxon>Gammaproteobacteria</taxon>
        <taxon>Pseudomonadales</taxon>
        <taxon>Pseudomonadaceae</taxon>
        <taxon>Pseudomonas</taxon>
    </lineage>
</organism>
<name>SYW_PSEPK</name>
<dbReference type="EC" id="6.1.1.2" evidence="1"/>
<dbReference type="EMBL" id="AE015451">
    <property type="protein sequence ID" value="AAN66935.1"/>
    <property type="molecule type" value="Genomic_DNA"/>
</dbReference>
<dbReference type="RefSeq" id="NP_743471.1">
    <property type="nucleotide sequence ID" value="NC_002947.4"/>
</dbReference>
<dbReference type="RefSeq" id="WP_010952434.1">
    <property type="nucleotide sequence ID" value="NZ_CP169744.1"/>
</dbReference>
<dbReference type="SMR" id="Q88NA1"/>
<dbReference type="STRING" id="160488.PP_1311"/>
<dbReference type="PaxDb" id="160488-PP_1311"/>
<dbReference type="KEGG" id="ppu:PP_1311"/>
<dbReference type="PATRIC" id="fig|160488.4.peg.1390"/>
<dbReference type="eggNOG" id="COG0180">
    <property type="taxonomic scope" value="Bacteria"/>
</dbReference>
<dbReference type="HOGENOM" id="CLU_029244_5_1_6"/>
<dbReference type="OrthoDB" id="9801042at2"/>
<dbReference type="PhylomeDB" id="Q88NA1"/>
<dbReference type="BioCyc" id="PPUT160488:G1G01-1398-MONOMER"/>
<dbReference type="Proteomes" id="UP000000556">
    <property type="component" value="Chromosome"/>
</dbReference>
<dbReference type="GO" id="GO:0005829">
    <property type="term" value="C:cytosol"/>
    <property type="evidence" value="ECO:0007669"/>
    <property type="project" value="TreeGrafter"/>
</dbReference>
<dbReference type="GO" id="GO:0005524">
    <property type="term" value="F:ATP binding"/>
    <property type="evidence" value="ECO:0007669"/>
    <property type="project" value="UniProtKB-UniRule"/>
</dbReference>
<dbReference type="GO" id="GO:0004830">
    <property type="term" value="F:tryptophan-tRNA ligase activity"/>
    <property type="evidence" value="ECO:0007669"/>
    <property type="project" value="UniProtKB-UniRule"/>
</dbReference>
<dbReference type="GO" id="GO:0006436">
    <property type="term" value="P:tryptophanyl-tRNA aminoacylation"/>
    <property type="evidence" value="ECO:0007669"/>
    <property type="project" value="UniProtKB-UniRule"/>
</dbReference>
<dbReference type="CDD" id="cd00806">
    <property type="entry name" value="TrpRS_core"/>
    <property type="match status" value="1"/>
</dbReference>
<dbReference type="FunFam" id="1.10.240.10:FF:000005">
    <property type="entry name" value="Tryptophan--tRNA ligase"/>
    <property type="match status" value="1"/>
</dbReference>
<dbReference type="FunFam" id="3.40.50.620:FF:000144">
    <property type="entry name" value="Tryptophan--tRNA ligase"/>
    <property type="match status" value="1"/>
</dbReference>
<dbReference type="Gene3D" id="2.30.29.80">
    <property type="match status" value="1"/>
</dbReference>
<dbReference type="Gene3D" id="3.40.50.620">
    <property type="entry name" value="HUPs"/>
    <property type="match status" value="1"/>
</dbReference>
<dbReference type="Gene3D" id="1.10.240.10">
    <property type="entry name" value="Tyrosyl-Transfer RNA Synthetase"/>
    <property type="match status" value="1"/>
</dbReference>
<dbReference type="HAMAP" id="MF_00140_B">
    <property type="entry name" value="Trp_tRNA_synth_B"/>
    <property type="match status" value="1"/>
</dbReference>
<dbReference type="InterPro" id="IPR002305">
    <property type="entry name" value="aa-tRNA-synth_Ic"/>
</dbReference>
<dbReference type="InterPro" id="IPR014729">
    <property type="entry name" value="Rossmann-like_a/b/a_fold"/>
</dbReference>
<dbReference type="InterPro" id="IPR002306">
    <property type="entry name" value="Trp-tRNA-ligase"/>
</dbReference>
<dbReference type="InterPro" id="IPR024109">
    <property type="entry name" value="Trp-tRNA-ligase_bac-type"/>
</dbReference>
<dbReference type="InterPro" id="IPR050203">
    <property type="entry name" value="Trp-tRNA_synthetase"/>
</dbReference>
<dbReference type="InterPro" id="IPR036913">
    <property type="entry name" value="YegP-like_sf"/>
</dbReference>
<dbReference type="NCBIfam" id="NF008923">
    <property type="entry name" value="PRK12284.1"/>
    <property type="match status" value="1"/>
</dbReference>
<dbReference type="NCBIfam" id="TIGR00233">
    <property type="entry name" value="trpS"/>
    <property type="match status" value="1"/>
</dbReference>
<dbReference type="PANTHER" id="PTHR43766">
    <property type="entry name" value="TRYPTOPHAN--TRNA LIGASE, MITOCHONDRIAL"/>
    <property type="match status" value="1"/>
</dbReference>
<dbReference type="PANTHER" id="PTHR43766:SF1">
    <property type="entry name" value="TRYPTOPHAN--TRNA LIGASE, MITOCHONDRIAL"/>
    <property type="match status" value="1"/>
</dbReference>
<dbReference type="Pfam" id="PF00579">
    <property type="entry name" value="tRNA-synt_1b"/>
    <property type="match status" value="1"/>
</dbReference>
<dbReference type="PRINTS" id="PR01039">
    <property type="entry name" value="TRNASYNTHTRP"/>
</dbReference>
<dbReference type="SUPFAM" id="SSF52374">
    <property type="entry name" value="Nucleotidylyl transferase"/>
    <property type="match status" value="1"/>
</dbReference>
<dbReference type="SUPFAM" id="SSF160113">
    <property type="entry name" value="YegP-like"/>
    <property type="match status" value="1"/>
</dbReference>
<feature type="chain" id="PRO_0000136663" description="Tryptophan--tRNA ligase">
    <location>
        <begin position="1"/>
        <end position="449"/>
    </location>
</feature>
<feature type="short sequence motif" description="'HIGH' region" evidence="1">
    <location>
        <begin position="11"/>
        <end position="19"/>
    </location>
</feature>
<feature type="short sequence motif" description="'KMSKS' region" evidence="1">
    <location>
        <begin position="204"/>
        <end position="208"/>
    </location>
</feature>
<feature type="binding site" evidence="1">
    <location>
        <begin position="10"/>
        <end position="12"/>
    </location>
    <ligand>
        <name>ATP</name>
        <dbReference type="ChEBI" id="CHEBI:30616"/>
    </ligand>
</feature>
<feature type="binding site" evidence="1">
    <location>
        <begin position="18"/>
        <end position="19"/>
    </location>
    <ligand>
        <name>ATP</name>
        <dbReference type="ChEBI" id="CHEBI:30616"/>
    </ligand>
</feature>
<feature type="binding site" evidence="1">
    <location>
        <position position="143"/>
    </location>
    <ligand>
        <name>L-tryptophan</name>
        <dbReference type="ChEBI" id="CHEBI:57912"/>
    </ligand>
</feature>
<feature type="binding site" evidence="1">
    <location>
        <begin position="155"/>
        <end position="157"/>
    </location>
    <ligand>
        <name>ATP</name>
        <dbReference type="ChEBI" id="CHEBI:30616"/>
    </ligand>
</feature>
<feature type="binding site" evidence="1">
    <location>
        <position position="197"/>
    </location>
    <ligand>
        <name>ATP</name>
        <dbReference type="ChEBI" id="CHEBI:30616"/>
    </ligand>
</feature>
<feature type="binding site" evidence="1">
    <location>
        <begin position="204"/>
        <end position="208"/>
    </location>
    <ligand>
        <name>ATP</name>
        <dbReference type="ChEBI" id="CHEBI:30616"/>
    </ligand>
</feature>
<gene>
    <name evidence="1" type="primary">trpS</name>
    <name type="ordered locus">PP_1311</name>
</gene>
<proteinExistence type="inferred from homology"/>
<protein>
    <recommendedName>
        <fullName evidence="1">Tryptophan--tRNA ligase</fullName>
        <ecNumber evidence="1">6.1.1.2</ecNumber>
    </recommendedName>
    <alternativeName>
        <fullName evidence="1">Tryptophanyl-tRNA synthetase</fullName>
        <shortName evidence="1">TrpRS</shortName>
    </alternativeName>
</protein>
<accession>Q88NA1</accession>
<keyword id="KW-0030">Aminoacyl-tRNA synthetase</keyword>
<keyword id="KW-0067">ATP-binding</keyword>
<keyword id="KW-0963">Cytoplasm</keyword>
<keyword id="KW-0436">Ligase</keyword>
<keyword id="KW-0547">Nucleotide-binding</keyword>
<keyword id="KW-0648">Protein biosynthesis</keyword>
<keyword id="KW-1185">Reference proteome</keyword>
<evidence type="ECO:0000255" key="1">
    <source>
        <dbReference type="HAMAP-Rule" id="MF_00140"/>
    </source>
</evidence>
<reference key="1">
    <citation type="journal article" date="2002" name="Environ. Microbiol.">
        <title>Complete genome sequence and comparative analysis of the metabolically versatile Pseudomonas putida KT2440.</title>
        <authorList>
            <person name="Nelson K.E."/>
            <person name="Weinel C."/>
            <person name="Paulsen I.T."/>
            <person name="Dodson R.J."/>
            <person name="Hilbert H."/>
            <person name="Martins dos Santos V.A.P."/>
            <person name="Fouts D.E."/>
            <person name="Gill S.R."/>
            <person name="Pop M."/>
            <person name="Holmes M."/>
            <person name="Brinkac L.M."/>
            <person name="Beanan M.J."/>
            <person name="DeBoy R.T."/>
            <person name="Daugherty S.C."/>
            <person name="Kolonay J.F."/>
            <person name="Madupu R."/>
            <person name="Nelson W.C."/>
            <person name="White O."/>
            <person name="Peterson J.D."/>
            <person name="Khouri H.M."/>
            <person name="Hance I."/>
            <person name="Chris Lee P."/>
            <person name="Holtzapple E.K."/>
            <person name="Scanlan D."/>
            <person name="Tran K."/>
            <person name="Moazzez A."/>
            <person name="Utterback T.R."/>
            <person name="Rizzo M."/>
            <person name="Lee K."/>
            <person name="Kosack D."/>
            <person name="Moestl D."/>
            <person name="Wedler H."/>
            <person name="Lauber J."/>
            <person name="Stjepandic D."/>
            <person name="Hoheisel J."/>
            <person name="Straetz M."/>
            <person name="Heim S."/>
            <person name="Kiewitz C."/>
            <person name="Eisen J.A."/>
            <person name="Timmis K.N."/>
            <person name="Duesterhoeft A."/>
            <person name="Tuemmler B."/>
            <person name="Fraser C.M."/>
        </authorList>
    </citation>
    <scope>NUCLEOTIDE SEQUENCE [LARGE SCALE GENOMIC DNA]</scope>
    <source>
        <strain>ATCC 47054 / DSM 6125 / CFBP 8728 / NCIMB 11950 / KT2440</strain>
    </source>
</reference>
<sequence length="449" mass="49298">MTTRILTGITTTGTPHLGNYAGAIRPAIRASQQPGVDSFYFLADYHALIKCDDPLRIQRSRLEIAATWLAGGLDPDKVTFYRQSDIPEIPELTWLLTCVAAKGLLNRAHAYKASVDKNVENGEDPDAGVTMGLFSYPVLMAADILMFNANKVPVGRDQIQHVEMARDIGQRFNHLFGQGKDFFALPEAVIEESVATLPGLDGRKMSKSYDNTIPLFTSAKDMKDAISRIVTDSRAPGEAKDPDNAHLFTLYQAFSTPEQCAGFREELLQGLGWGDAKQRLFQLLDGQLAEKREYYHQLIARPADLEDILLAGAAKARKIATPFLEQLREAVGLRSFRSSVQATAEVKKKATKSARFVSFRDEDGSFRFRLLAADGEQLLLSRSFADGKSAGAVSKQLQQGGEADVRIEGLSFGLWLNGEQVADGPQFDNAEARDAAIQSLNEALAPQQD</sequence>